<organism>
    <name type="scientific">Xenopus laevis</name>
    <name type="common">African clawed frog</name>
    <dbReference type="NCBI Taxonomy" id="8355"/>
    <lineage>
        <taxon>Eukaryota</taxon>
        <taxon>Metazoa</taxon>
        <taxon>Chordata</taxon>
        <taxon>Craniata</taxon>
        <taxon>Vertebrata</taxon>
        <taxon>Euteleostomi</taxon>
        <taxon>Amphibia</taxon>
        <taxon>Batrachia</taxon>
        <taxon>Anura</taxon>
        <taxon>Pipoidea</taxon>
        <taxon>Pipidae</taxon>
        <taxon>Xenopodinae</taxon>
        <taxon>Xenopus</taxon>
        <taxon>Xenopus</taxon>
    </lineage>
</organism>
<evidence type="ECO:0000256" key="1">
    <source>
        <dbReference type="SAM" id="MobiDB-lite"/>
    </source>
</evidence>
<evidence type="ECO:0000305" key="2"/>
<comment type="similarity">
    <text evidence="2">Belongs to the SLAIN motif-containing family.</text>
</comment>
<proteinExistence type="evidence at transcript level"/>
<keyword id="KW-0175">Coiled coil</keyword>
<keyword id="KW-1185">Reference proteome</keyword>
<name>SLAIL_XENLA</name>
<sequence length="562" mass="61986">MVVPGNSHGIPRDHAIDLSDRAMDLEAEPGQSSDLKEVQKLHELVKRLEIQNQQLKIKRNPQDNHLSALNCTGVMNSINIQPEKGDLQIMPNLQSQLEQINSEKENIPALRMDAQMQYEKVCSDSKPGHKVEIHCDQDDSCFYSVDGSGRSELEEAISKMSELNSSGENILDETALDEVDVLELGSCSEDEEDCWLYVSPRKVENAEQKPDSPLKWCRQVLDHHSPETEAACRSLIGKLDQGYLSIHSALSSQSSVDSELSTSDDSISMGYKLQDLTDVQVMARLQEESLRQDYASSSASVSRRSSSASLHSLRRGTFSDQEFDTYSLEDEDDCDCSLSFRSSHRYSPSPLSSPRCQSPSAAESRATTSRIRPPRRSIQNHVQERMKYANCEDEMRHSMPNLAKTSLRSLEAVRSSRSLESDLQGPSSRLTRMQQPSTSTPPSKMRYGASNQPALTARQPIKPGVSTSSLLTSRQAIKSSGYNNSSGIRKIQSSPGLNPSGSSAVSRTGNVSSSIKHSTVKSQASMGSTVPKSKMIQPSRRSLPSAKMNSTLGDDSWKDGCY</sequence>
<accession>Q5XG16</accession>
<protein>
    <recommendedName>
        <fullName>SLAIN motif-containing protein-like</fullName>
    </recommendedName>
</protein>
<dbReference type="EMBL" id="BC084655">
    <property type="protein sequence ID" value="AAH84655.1"/>
    <property type="molecule type" value="mRNA"/>
</dbReference>
<dbReference type="RefSeq" id="NP_001088382.1">
    <property type="nucleotide sequence ID" value="NM_001094913.1"/>
</dbReference>
<dbReference type="SMR" id="Q5XG16"/>
<dbReference type="BioGRID" id="105314">
    <property type="interactions" value="1"/>
</dbReference>
<dbReference type="IntAct" id="Q5XG16">
    <property type="interactions" value="1"/>
</dbReference>
<dbReference type="DNASU" id="495234"/>
<dbReference type="GeneID" id="495234"/>
<dbReference type="KEGG" id="xla:495234"/>
<dbReference type="AGR" id="Xenbase:XB-GENE-5831522"/>
<dbReference type="CTD" id="495234"/>
<dbReference type="Xenbase" id="XB-GENE-5831522">
    <property type="gene designation" value="slain2l.L"/>
</dbReference>
<dbReference type="OrthoDB" id="6347145at2759"/>
<dbReference type="Proteomes" id="UP000186698">
    <property type="component" value="Chromosome 8L"/>
</dbReference>
<dbReference type="Bgee" id="495234">
    <property type="expression patterns" value="Expressed in blastula and 19 other cell types or tissues"/>
</dbReference>
<dbReference type="GO" id="GO:0035371">
    <property type="term" value="C:microtubule plus-end"/>
    <property type="evidence" value="ECO:0007669"/>
    <property type="project" value="TreeGrafter"/>
</dbReference>
<dbReference type="GO" id="GO:0031122">
    <property type="term" value="P:cytoplasmic microtubule organization"/>
    <property type="evidence" value="ECO:0000318"/>
    <property type="project" value="GO_Central"/>
</dbReference>
<dbReference type="GO" id="GO:0007020">
    <property type="term" value="P:microtubule nucleation"/>
    <property type="evidence" value="ECO:0000318"/>
    <property type="project" value="GO_Central"/>
</dbReference>
<dbReference type="GO" id="GO:0031116">
    <property type="term" value="P:positive regulation of microtubule polymerization"/>
    <property type="evidence" value="ECO:0000318"/>
    <property type="project" value="GO_Central"/>
</dbReference>
<dbReference type="InterPro" id="IPR026179">
    <property type="entry name" value="Slain"/>
</dbReference>
<dbReference type="PANTHER" id="PTHR22406">
    <property type="entry name" value="NASCENT POLYPEPTIDE-ASSOCIATED COMPLEX SUBUNIT ALPHA, MUSCLE-SPECIFIC FORM"/>
    <property type="match status" value="1"/>
</dbReference>
<dbReference type="PANTHER" id="PTHR22406:SF5">
    <property type="entry name" value="SLAIN MOTIF-CONTAINING PROTEIN-LIKE"/>
    <property type="match status" value="1"/>
</dbReference>
<dbReference type="Pfam" id="PF15301">
    <property type="entry name" value="SLAIN"/>
    <property type="match status" value="2"/>
</dbReference>
<reference key="1">
    <citation type="submission" date="2004-10" db="EMBL/GenBank/DDBJ databases">
        <authorList>
            <consortium name="NIH - Xenopus Gene Collection (XGC) project"/>
        </authorList>
    </citation>
    <scope>NUCLEOTIDE SEQUENCE [LARGE SCALE MRNA]</scope>
    <source>
        <tissue>Embryo</tissue>
    </source>
</reference>
<feature type="chain" id="PRO_0000316968" description="SLAIN motif-containing protein-like">
    <location>
        <begin position="1"/>
        <end position="562"/>
    </location>
</feature>
<feature type="region of interest" description="Disordered" evidence="1">
    <location>
        <begin position="292"/>
        <end position="313"/>
    </location>
</feature>
<feature type="region of interest" description="Disordered" evidence="1">
    <location>
        <begin position="344"/>
        <end position="381"/>
    </location>
</feature>
<feature type="region of interest" description="Disordered" evidence="1">
    <location>
        <begin position="409"/>
        <end position="562"/>
    </location>
</feature>
<feature type="compositionally biased region" description="Low complexity" evidence="1">
    <location>
        <begin position="295"/>
        <end position="311"/>
    </location>
</feature>
<feature type="compositionally biased region" description="Low complexity" evidence="1">
    <location>
        <begin position="345"/>
        <end position="355"/>
    </location>
</feature>
<feature type="compositionally biased region" description="Polar residues" evidence="1">
    <location>
        <begin position="356"/>
        <end position="370"/>
    </location>
</feature>
<feature type="compositionally biased region" description="Polar residues" evidence="1">
    <location>
        <begin position="424"/>
        <end position="442"/>
    </location>
</feature>
<feature type="compositionally biased region" description="Polar residues" evidence="1">
    <location>
        <begin position="465"/>
        <end position="531"/>
    </location>
</feature>
<feature type="compositionally biased region" description="Polar residues" evidence="1">
    <location>
        <begin position="539"/>
        <end position="553"/>
    </location>
</feature>